<keyword id="KW-0067">ATP-binding</keyword>
<keyword id="KW-0963">Cytoplasm</keyword>
<keyword id="KW-0237">DNA synthesis</keyword>
<keyword id="KW-0418">Kinase</keyword>
<keyword id="KW-0479">Metal-binding</keyword>
<keyword id="KW-0547">Nucleotide-binding</keyword>
<keyword id="KW-0808">Transferase</keyword>
<keyword id="KW-0862">Zinc</keyword>
<feature type="chain" id="PRO_0000175026" description="Thymidine kinase">
    <location>
        <begin position="1"/>
        <end position="189"/>
    </location>
</feature>
<feature type="active site" description="Proton acceptor" evidence="1">
    <location>
        <position position="86"/>
    </location>
</feature>
<feature type="binding site" evidence="1">
    <location>
        <begin position="9"/>
        <end position="16"/>
    </location>
    <ligand>
        <name>ATP</name>
        <dbReference type="ChEBI" id="CHEBI:30616"/>
    </ligand>
</feature>
<feature type="binding site" evidence="1">
    <location>
        <begin position="85"/>
        <end position="88"/>
    </location>
    <ligand>
        <name>ATP</name>
        <dbReference type="ChEBI" id="CHEBI:30616"/>
    </ligand>
</feature>
<feature type="binding site" evidence="1">
    <location>
        <position position="143"/>
    </location>
    <ligand>
        <name>Zn(2+)</name>
        <dbReference type="ChEBI" id="CHEBI:29105"/>
    </ligand>
</feature>
<feature type="binding site" evidence="1">
    <location>
        <position position="146"/>
    </location>
    <ligand>
        <name>Zn(2+)</name>
        <dbReference type="ChEBI" id="CHEBI:29105"/>
    </ligand>
</feature>
<feature type="binding site" evidence="1">
    <location>
        <position position="180"/>
    </location>
    <ligand>
        <name>Zn(2+)</name>
        <dbReference type="ChEBI" id="CHEBI:29105"/>
    </ligand>
</feature>
<feature type="binding site" evidence="1">
    <location>
        <position position="183"/>
    </location>
    <ligand>
        <name>Zn(2+)</name>
        <dbReference type="ChEBI" id="CHEBI:29105"/>
    </ligand>
</feature>
<gene>
    <name evidence="1" type="primary">tdk</name>
    <name type="ordered locus">gbs1110</name>
</gene>
<comment type="catalytic activity">
    <reaction evidence="1">
        <text>thymidine + ATP = dTMP + ADP + H(+)</text>
        <dbReference type="Rhea" id="RHEA:19129"/>
        <dbReference type="ChEBI" id="CHEBI:15378"/>
        <dbReference type="ChEBI" id="CHEBI:17748"/>
        <dbReference type="ChEBI" id="CHEBI:30616"/>
        <dbReference type="ChEBI" id="CHEBI:63528"/>
        <dbReference type="ChEBI" id="CHEBI:456216"/>
        <dbReference type="EC" id="2.7.1.21"/>
    </reaction>
</comment>
<comment type="subunit">
    <text evidence="1">Homotetramer.</text>
</comment>
<comment type="subcellular location">
    <subcellularLocation>
        <location evidence="1">Cytoplasm</location>
    </subcellularLocation>
</comment>
<comment type="similarity">
    <text evidence="1">Belongs to the thymidine kinase family.</text>
</comment>
<proteinExistence type="inferred from homology"/>
<organism>
    <name type="scientific">Streptococcus agalactiae serotype III (strain NEM316)</name>
    <dbReference type="NCBI Taxonomy" id="211110"/>
    <lineage>
        <taxon>Bacteria</taxon>
        <taxon>Bacillati</taxon>
        <taxon>Bacillota</taxon>
        <taxon>Bacilli</taxon>
        <taxon>Lactobacillales</taxon>
        <taxon>Streptococcaceae</taxon>
        <taxon>Streptococcus</taxon>
    </lineage>
</organism>
<protein>
    <recommendedName>
        <fullName evidence="1">Thymidine kinase</fullName>
        <ecNumber evidence="1">2.7.1.21</ecNumber>
    </recommendedName>
</protein>
<name>KITH_STRA3</name>
<dbReference type="EC" id="2.7.1.21" evidence="1"/>
<dbReference type="EMBL" id="AL766848">
    <property type="protein sequence ID" value="CAD46769.1"/>
    <property type="molecule type" value="Genomic_DNA"/>
</dbReference>
<dbReference type="RefSeq" id="WP_000068109.1">
    <property type="nucleotide sequence ID" value="NC_004368.1"/>
</dbReference>
<dbReference type="SMR" id="Q8E5C2"/>
<dbReference type="KEGG" id="san:gbs1110"/>
<dbReference type="eggNOG" id="COG1435">
    <property type="taxonomic scope" value="Bacteria"/>
</dbReference>
<dbReference type="HOGENOM" id="CLU_064400_2_2_9"/>
<dbReference type="Proteomes" id="UP000000823">
    <property type="component" value="Chromosome"/>
</dbReference>
<dbReference type="GO" id="GO:0005829">
    <property type="term" value="C:cytosol"/>
    <property type="evidence" value="ECO:0007669"/>
    <property type="project" value="TreeGrafter"/>
</dbReference>
<dbReference type="GO" id="GO:0005524">
    <property type="term" value="F:ATP binding"/>
    <property type="evidence" value="ECO:0007669"/>
    <property type="project" value="UniProtKB-UniRule"/>
</dbReference>
<dbReference type="GO" id="GO:0004797">
    <property type="term" value="F:thymidine kinase activity"/>
    <property type="evidence" value="ECO:0007669"/>
    <property type="project" value="UniProtKB-UniRule"/>
</dbReference>
<dbReference type="GO" id="GO:0008270">
    <property type="term" value="F:zinc ion binding"/>
    <property type="evidence" value="ECO:0007669"/>
    <property type="project" value="UniProtKB-UniRule"/>
</dbReference>
<dbReference type="GO" id="GO:0071897">
    <property type="term" value="P:DNA biosynthetic process"/>
    <property type="evidence" value="ECO:0007669"/>
    <property type="project" value="UniProtKB-KW"/>
</dbReference>
<dbReference type="GO" id="GO:0046104">
    <property type="term" value="P:thymidine metabolic process"/>
    <property type="evidence" value="ECO:0007669"/>
    <property type="project" value="TreeGrafter"/>
</dbReference>
<dbReference type="Gene3D" id="3.30.60.20">
    <property type="match status" value="1"/>
</dbReference>
<dbReference type="Gene3D" id="3.40.50.300">
    <property type="entry name" value="P-loop containing nucleotide triphosphate hydrolases"/>
    <property type="match status" value="1"/>
</dbReference>
<dbReference type="HAMAP" id="MF_00124">
    <property type="entry name" value="Thymidine_kinase"/>
    <property type="match status" value="1"/>
</dbReference>
<dbReference type="InterPro" id="IPR027417">
    <property type="entry name" value="P-loop_NTPase"/>
</dbReference>
<dbReference type="InterPro" id="IPR001267">
    <property type="entry name" value="Thymidine_kinase"/>
</dbReference>
<dbReference type="InterPro" id="IPR020633">
    <property type="entry name" value="Thymidine_kinase_CS"/>
</dbReference>
<dbReference type="NCBIfam" id="NF003299">
    <property type="entry name" value="PRK04296.1-4"/>
    <property type="match status" value="1"/>
</dbReference>
<dbReference type="NCBIfam" id="NF003300">
    <property type="entry name" value="PRK04296.1-5"/>
    <property type="match status" value="1"/>
</dbReference>
<dbReference type="PANTHER" id="PTHR11441">
    <property type="entry name" value="THYMIDINE KINASE"/>
    <property type="match status" value="1"/>
</dbReference>
<dbReference type="PANTHER" id="PTHR11441:SF0">
    <property type="entry name" value="THYMIDINE KINASE, CYTOSOLIC"/>
    <property type="match status" value="1"/>
</dbReference>
<dbReference type="Pfam" id="PF00265">
    <property type="entry name" value="TK"/>
    <property type="match status" value="1"/>
</dbReference>
<dbReference type="PIRSF" id="PIRSF035805">
    <property type="entry name" value="TK_cell"/>
    <property type="match status" value="1"/>
</dbReference>
<dbReference type="SUPFAM" id="SSF57716">
    <property type="entry name" value="Glucocorticoid receptor-like (DNA-binding domain)"/>
    <property type="match status" value="1"/>
</dbReference>
<dbReference type="SUPFAM" id="SSF52540">
    <property type="entry name" value="P-loop containing nucleoside triphosphate hydrolases"/>
    <property type="match status" value="1"/>
</dbReference>
<dbReference type="PROSITE" id="PS00603">
    <property type="entry name" value="TK_CELLULAR_TYPE"/>
    <property type="match status" value="1"/>
</dbReference>
<sequence>MAQLYYKYGTMNSGKTIEILKVAHNYEEQGKPVVIMTSALDTRDEFGVVSSRIGMRREAVPISDDMDIFSYIQNLPQKPYCVLIDECQFLSKKNVYDLARVVDDLDVPVMAFGLKNDFQNNLFEGSKHLLLLADKIDEIKTICQYCSKKATMVLRTENGKPVYEGDQIQIGGNETYIPVCRKHYFNPDI</sequence>
<evidence type="ECO:0000255" key="1">
    <source>
        <dbReference type="HAMAP-Rule" id="MF_00124"/>
    </source>
</evidence>
<accession>Q8E5C2</accession>
<reference key="1">
    <citation type="journal article" date="2002" name="Mol. Microbiol.">
        <title>Genome sequence of Streptococcus agalactiae, a pathogen causing invasive neonatal disease.</title>
        <authorList>
            <person name="Glaser P."/>
            <person name="Rusniok C."/>
            <person name="Buchrieser C."/>
            <person name="Chevalier F."/>
            <person name="Frangeul L."/>
            <person name="Msadek T."/>
            <person name="Zouine M."/>
            <person name="Couve E."/>
            <person name="Lalioui L."/>
            <person name="Poyart C."/>
            <person name="Trieu-Cuot P."/>
            <person name="Kunst F."/>
        </authorList>
    </citation>
    <scope>NUCLEOTIDE SEQUENCE [LARGE SCALE GENOMIC DNA]</scope>
    <source>
        <strain>NEM316</strain>
    </source>
</reference>